<comment type="function">
    <text evidence="1">Component of the cytochrome b6-f complex, which mediates electron transfer between photosystem II (PSII) and photosystem I (PSI), cyclic electron flow around PSI, and state transitions.</text>
</comment>
<comment type="subunit">
    <text evidence="1">The 4 large subunits of the cytochrome b6-f complex are cytochrome b6, subunit IV (17 kDa polypeptide, PetD), cytochrome f and the Rieske protein, while the 4 small subunits are PetG, PetL, PetM and PetN. The complex functions as a dimer.</text>
</comment>
<comment type="subcellular location">
    <subcellularLocation>
        <location>Plastid</location>
        <location>Chloroplast thylakoid membrane</location>
        <topology>Single-pass membrane protein</topology>
    </subcellularLocation>
</comment>
<comment type="similarity">
    <text evidence="1">Belongs to the PetN family.</text>
</comment>
<sequence length="29" mass="3170">MDIVSLAWAALMVVFTFSLSLVVWGRSGL</sequence>
<proteinExistence type="inferred from homology"/>
<dbReference type="EMBL" id="DQ899947">
    <property type="protein sequence ID" value="ABI32502.1"/>
    <property type="molecule type" value="Genomic_DNA"/>
</dbReference>
<dbReference type="RefSeq" id="YP_740195.1">
    <property type="nucleotide sequence ID" value="NC_008326.1"/>
</dbReference>
<dbReference type="SMR" id="Q0G9M6"/>
<dbReference type="GeneID" id="4266604"/>
<dbReference type="GO" id="GO:0009535">
    <property type="term" value="C:chloroplast thylakoid membrane"/>
    <property type="evidence" value="ECO:0007669"/>
    <property type="project" value="UniProtKB-SubCell"/>
</dbReference>
<dbReference type="GO" id="GO:0009512">
    <property type="term" value="C:cytochrome b6f complex"/>
    <property type="evidence" value="ECO:0007669"/>
    <property type="project" value="InterPro"/>
</dbReference>
<dbReference type="GO" id="GO:0045158">
    <property type="term" value="F:electron transporter, transferring electrons within cytochrome b6/f complex of photosystem II activity"/>
    <property type="evidence" value="ECO:0007669"/>
    <property type="project" value="InterPro"/>
</dbReference>
<dbReference type="GO" id="GO:0017004">
    <property type="term" value="P:cytochrome complex assembly"/>
    <property type="evidence" value="ECO:0007669"/>
    <property type="project" value="UniProtKB-UniRule"/>
</dbReference>
<dbReference type="GO" id="GO:0015979">
    <property type="term" value="P:photosynthesis"/>
    <property type="evidence" value="ECO:0007669"/>
    <property type="project" value="UniProtKB-KW"/>
</dbReference>
<dbReference type="HAMAP" id="MF_00395">
    <property type="entry name" value="Cytb6_f_PetN"/>
    <property type="match status" value="1"/>
</dbReference>
<dbReference type="InterPro" id="IPR036143">
    <property type="entry name" value="Cytochr_b6-f_cplx_su8_sf"/>
</dbReference>
<dbReference type="InterPro" id="IPR005497">
    <property type="entry name" value="Cytochrome_b6-f_cplx_su8"/>
</dbReference>
<dbReference type="Pfam" id="PF03742">
    <property type="entry name" value="PetN"/>
    <property type="match status" value="1"/>
</dbReference>
<dbReference type="SUPFAM" id="SSF103451">
    <property type="entry name" value="PetN subunit of the cytochrome b6f complex"/>
    <property type="match status" value="1"/>
</dbReference>
<organism>
    <name type="scientific">Liriodendron tulipifera</name>
    <name type="common">Tuliptree</name>
    <name type="synonym">Tulip poplar</name>
    <dbReference type="NCBI Taxonomy" id="3415"/>
    <lineage>
        <taxon>Eukaryota</taxon>
        <taxon>Viridiplantae</taxon>
        <taxon>Streptophyta</taxon>
        <taxon>Embryophyta</taxon>
        <taxon>Tracheophyta</taxon>
        <taxon>Spermatophyta</taxon>
        <taxon>Magnoliopsida</taxon>
        <taxon>Magnoliidae</taxon>
        <taxon>Magnoliales</taxon>
        <taxon>Magnoliaceae</taxon>
        <taxon>Liriodendron</taxon>
    </lineage>
</organism>
<reference key="1">
    <citation type="journal article" date="2006" name="BMC Evol. Biol.">
        <title>Complete plastid genome sequences of Drimys, Liriodendron, and Piper: implications for the phylogenetic relationships of magnoliids.</title>
        <authorList>
            <person name="Cai Z."/>
            <person name="Penaflor C."/>
            <person name="Kuehl J.V."/>
            <person name="Leebens-Mack J."/>
            <person name="Carlson J.E."/>
            <person name="dePamphilis C.W."/>
            <person name="Boore J.L."/>
            <person name="Jansen R.K."/>
        </authorList>
    </citation>
    <scope>NUCLEOTIDE SEQUENCE [LARGE SCALE GENOMIC DNA]</scope>
</reference>
<accession>Q0G9M6</accession>
<feature type="chain" id="PRO_0000275556" description="Cytochrome b6-f complex subunit 8">
    <location>
        <begin position="1"/>
        <end position="29"/>
    </location>
</feature>
<feature type="transmembrane region" description="Helical" evidence="1">
    <location>
        <begin position="3"/>
        <end position="23"/>
    </location>
</feature>
<protein>
    <recommendedName>
        <fullName evidence="1">Cytochrome b6-f complex subunit 8</fullName>
    </recommendedName>
    <alternativeName>
        <fullName evidence="1">Cytochrome b6-f complex subunit PetN</fullName>
    </alternativeName>
    <alternativeName>
        <fullName evidence="1">Cytochrome b6-f complex subunit VIII</fullName>
    </alternativeName>
</protein>
<gene>
    <name evidence="1" type="primary">petN</name>
</gene>
<evidence type="ECO:0000255" key="1">
    <source>
        <dbReference type="HAMAP-Rule" id="MF_00395"/>
    </source>
</evidence>
<name>PETN_LIRTU</name>
<geneLocation type="chloroplast"/>
<keyword id="KW-0150">Chloroplast</keyword>
<keyword id="KW-0249">Electron transport</keyword>
<keyword id="KW-0472">Membrane</keyword>
<keyword id="KW-0602">Photosynthesis</keyword>
<keyword id="KW-0934">Plastid</keyword>
<keyword id="KW-0793">Thylakoid</keyword>
<keyword id="KW-0812">Transmembrane</keyword>
<keyword id="KW-1133">Transmembrane helix</keyword>
<keyword id="KW-0813">Transport</keyword>